<reference key="1">
    <citation type="journal article" date="2008" name="DNA Res.">
        <title>Complete genome sequence and comparative analysis of the wild-type commensal Escherichia coli strain SE11 isolated from a healthy adult.</title>
        <authorList>
            <person name="Oshima K."/>
            <person name="Toh H."/>
            <person name="Ogura Y."/>
            <person name="Sasamoto H."/>
            <person name="Morita H."/>
            <person name="Park S.-H."/>
            <person name="Ooka T."/>
            <person name="Iyoda S."/>
            <person name="Taylor T.D."/>
            <person name="Hayashi T."/>
            <person name="Itoh K."/>
            <person name="Hattori M."/>
        </authorList>
    </citation>
    <scope>NUCLEOTIDE SEQUENCE [LARGE SCALE GENOMIC DNA]</scope>
    <source>
        <strain>SE11</strain>
    </source>
</reference>
<protein>
    <recommendedName>
        <fullName evidence="1">D-aminoacyl-tRNA deacylase</fullName>
        <shortName evidence="1">DTD</shortName>
        <ecNumber evidence="1">3.1.1.96</ecNumber>
    </recommendedName>
    <alternativeName>
        <fullName evidence="1">Gly-tRNA(Ala) deacylase</fullName>
    </alternativeName>
</protein>
<dbReference type="EC" id="3.1.1.96" evidence="1"/>
<dbReference type="EMBL" id="AP009240">
    <property type="protein sequence ID" value="BAG79694.1"/>
    <property type="molecule type" value="Genomic_DNA"/>
</dbReference>
<dbReference type="RefSeq" id="WP_000560983.1">
    <property type="nucleotide sequence ID" value="NC_011415.1"/>
</dbReference>
<dbReference type="SMR" id="B6I4M4"/>
<dbReference type="GeneID" id="93778051"/>
<dbReference type="KEGG" id="ecy:ECSE_4170"/>
<dbReference type="HOGENOM" id="CLU_076901_1_0_6"/>
<dbReference type="Proteomes" id="UP000008199">
    <property type="component" value="Chromosome"/>
</dbReference>
<dbReference type="GO" id="GO:0005737">
    <property type="term" value="C:cytoplasm"/>
    <property type="evidence" value="ECO:0007669"/>
    <property type="project" value="UniProtKB-SubCell"/>
</dbReference>
<dbReference type="GO" id="GO:0051500">
    <property type="term" value="F:D-tyrosyl-tRNA(Tyr) deacylase activity"/>
    <property type="evidence" value="ECO:0007669"/>
    <property type="project" value="TreeGrafter"/>
</dbReference>
<dbReference type="GO" id="GO:0106026">
    <property type="term" value="F:Gly-tRNA(Ala) deacylase activity"/>
    <property type="evidence" value="ECO:0007669"/>
    <property type="project" value="UniProtKB-UniRule"/>
</dbReference>
<dbReference type="GO" id="GO:0043908">
    <property type="term" value="F:Ser(Gly)-tRNA(Ala) hydrolase activity"/>
    <property type="evidence" value="ECO:0007669"/>
    <property type="project" value="UniProtKB-UniRule"/>
</dbReference>
<dbReference type="GO" id="GO:0000049">
    <property type="term" value="F:tRNA binding"/>
    <property type="evidence" value="ECO:0007669"/>
    <property type="project" value="UniProtKB-UniRule"/>
</dbReference>
<dbReference type="GO" id="GO:0019478">
    <property type="term" value="P:D-amino acid catabolic process"/>
    <property type="evidence" value="ECO:0007669"/>
    <property type="project" value="UniProtKB-UniRule"/>
</dbReference>
<dbReference type="CDD" id="cd00563">
    <property type="entry name" value="Dtyr_deacylase"/>
    <property type="match status" value="1"/>
</dbReference>
<dbReference type="FunFam" id="3.50.80.10:FF:000001">
    <property type="entry name" value="D-aminoacyl-tRNA deacylase"/>
    <property type="match status" value="1"/>
</dbReference>
<dbReference type="Gene3D" id="3.50.80.10">
    <property type="entry name" value="D-tyrosyl-tRNA(Tyr) deacylase"/>
    <property type="match status" value="1"/>
</dbReference>
<dbReference type="HAMAP" id="MF_00518">
    <property type="entry name" value="Deacylase_Dtd"/>
    <property type="match status" value="1"/>
</dbReference>
<dbReference type="InterPro" id="IPR003732">
    <property type="entry name" value="Daa-tRNA_deacyls_DTD"/>
</dbReference>
<dbReference type="InterPro" id="IPR023509">
    <property type="entry name" value="DTD-like_sf"/>
</dbReference>
<dbReference type="NCBIfam" id="TIGR00256">
    <property type="entry name" value="D-aminoacyl-tRNA deacylase"/>
    <property type="match status" value="1"/>
</dbReference>
<dbReference type="PANTHER" id="PTHR10472:SF5">
    <property type="entry name" value="D-AMINOACYL-TRNA DEACYLASE 1"/>
    <property type="match status" value="1"/>
</dbReference>
<dbReference type="PANTHER" id="PTHR10472">
    <property type="entry name" value="D-TYROSYL-TRNA TYR DEACYLASE"/>
    <property type="match status" value="1"/>
</dbReference>
<dbReference type="Pfam" id="PF02580">
    <property type="entry name" value="Tyr_Deacylase"/>
    <property type="match status" value="1"/>
</dbReference>
<dbReference type="SUPFAM" id="SSF69500">
    <property type="entry name" value="DTD-like"/>
    <property type="match status" value="1"/>
</dbReference>
<comment type="function">
    <text evidence="1">An aminoacyl-tRNA editing enzyme that deacylates mischarged D-aminoacyl-tRNAs. Also deacylates mischarged glycyl-tRNA(Ala), protecting cells against glycine mischarging by AlaRS. Acts via tRNA-based rather than protein-based catalysis; rejects L-amino acids rather than detecting D-amino acids in the active site. By recycling D-aminoacyl-tRNA to D-amino acids and free tRNA molecules, this enzyme counteracts the toxicity associated with the formation of D-aminoacyl-tRNA entities in vivo and helps enforce protein L-homochirality.</text>
</comment>
<comment type="catalytic activity">
    <reaction evidence="1">
        <text>glycyl-tRNA(Ala) + H2O = tRNA(Ala) + glycine + H(+)</text>
        <dbReference type="Rhea" id="RHEA:53744"/>
        <dbReference type="Rhea" id="RHEA-COMP:9657"/>
        <dbReference type="Rhea" id="RHEA-COMP:13640"/>
        <dbReference type="ChEBI" id="CHEBI:15377"/>
        <dbReference type="ChEBI" id="CHEBI:15378"/>
        <dbReference type="ChEBI" id="CHEBI:57305"/>
        <dbReference type="ChEBI" id="CHEBI:78442"/>
        <dbReference type="ChEBI" id="CHEBI:78522"/>
        <dbReference type="EC" id="3.1.1.96"/>
    </reaction>
</comment>
<comment type="catalytic activity">
    <reaction evidence="1">
        <text>a D-aminoacyl-tRNA + H2O = a tRNA + a D-alpha-amino acid + H(+)</text>
        <dbReference type="Rhea" id="RHEA:13953"/>
        <dbReference type="Rhea" id="RHEA-COMP:10123"/>
        <dbReference type="Rhea" id="RHEA-COMP:10124"/>
        <dbReference type="ChEBI" id="CHEBI:15377"/>
        <dbReference type="ChEBI" id="CHEBI:15378"/>
        <dbReference type="ChEBI" id="CHEBI:59871"/>
        <dbReference type="ChEBI" id="CHEBI:78442"/>
        <dbReference type="ChEBI" id="CHEBI:79333"/>
        <dbReference type="EC" id="3.1.1.96"/>
    </reaction>
</comment>
<comment type="subunit">
    <text evidence="1">Homodimer.</text>
</comment>
<comment type="subcellular location">
    <subcellularLocation>
        <location evidence="1">Cytoplasm</location>
    </subcellularLocation>
</comment>
<comment type="domain">
    <text evidence="1">A Gly-cisPro motif from one monomer fits into the active site of the other monomer to allow specific chiral rejection of L-amino acids.</text>
</comment>
<comment type="similarity">
    <text evidence="1">Belongs to the DTD family.</text>
</comment>
<gene>
    <name evidence="1" type="primary">dtd</name>
    <name type="ordered locus">ECSE_4170</name>
</gene>
<evidence type="ECO:0000255" key="1">
    <source>
        <dbReference type="HAMAP-Rule" id="MF_00518"/>
    </source>
</evidence>
<keyword id="KW-0963">Cytoplasm</keyword>
<keyword id="KW-0378">Hydrolase</keyword>
<keyword id="KW-0694">RNA-binding</keyword>
<keyword id="KW-0820">tRNA-binding</keyword>
<proteinExistence type="inferred from homology"/>
<organism>
    <name type="scientific">Escherichia coli (strain SE11)</name>
    <dbReference type="NCBI Taxonomy" id="409438"/>
    <lineage>
        <taxon>Bacteria</taxon>
        <taxon>Pseudomonadati</taxon>
        <taxon>Pseudomonadota</taxon>
        <taxon>Gammaproteobacteria</taxon>
        <taxon>Enterobacterales</taxon>
        <taxon>Enterobacteriaceae</taxon>
        <taxon>Escherichia</taxon>
    </lineage>
</organism>
<name>DTD_ECOSE</name>
<accession>B6I4M4</accession>
<sequence length="145" mass="15950">MIALIQRVTRASVTVEGEVTGEIGAGLLVLLGVEKDDDEQKANRLCERVLGYRIFSDAEGKMNLNVQQAGGSVLVVSQFTLAADTERGMRPSFSKGASPDRAEALYDYFVERCRQQEMNTQTGRFAADMQVSLVNDGPVTFWLQV</sequence>
<feature type="chain" id="PRO_1000127529" description="D-aminoacyl-tRNA deacylase">
    <location>
        <begin position="1"/>
        <end position="145"/>
    </location>
</feature>
<feature type="short sequence motif" description="Gly-cisPro motif, important for rejection of L-amino acids" evidence="1">
    <location>
        <begin position="137"/>
        <end position="138"/>
    </location>
</feature>